<sequence length="291" mass="31625">MKRIALFLATNLAVMIVFSIVLNIVYAVTGIQQGSLSGLLVMAVLFGFGGSLISLMMSKSMALRSVGGEVIEQPRNETEHWLLETVSRQAQQVGIGMPTVAIYDSPDMNAFATGAKRDDSLVAVSTGLLHSMTRDEAEAVLAHEVSHIANGDMITMTLMQGVVNTFVIFLSRMIANAVSGFTSSDEEGEGEGGSFMTYFIVSTILELAFGFLASFLTMWFSRHREFHADAGAAQLVGKQKMIAALERLRMGQESQLEGSMMAFGINGKKSLTELLMSHPPLEKRIDALRQM</sequence>
<feature type="chain" id="PRO_1000098857" description="Protease HtpX">
    <location>
        <begin position="1"/>
        <end position="291"/>
    </location>
</feature>
<feature type="transmembrane region" description="Helical" evidence="1">
    <location>
        <begin position="4"/>
        <end position="24"/>
    </location>
</feature>
<feature type="transmembrane region" description="Helical" evidence="1">
    <location>
        <begin position="36"/>
        <end position="56"/>
    </location>
</feature>
<feature type="transmembrane region" description="Helical" evidence="1">
    <location>
        <begin position="151"/>
        <end position="171"/>
    </location>
</feature>
<feature type="transmembrane region" description="Helical" evidence="1">
    <location>
        <begin position="199"/>
        <end position="219"/>
    </location>
</feature>
<feature type="active site" evidence="1">
    <location>
        <position position="144"/>
    </location>
</feature>
<feature type="binding site" evidence="1">
    <location>
        <position position="143"/>
    </location>
    <ligand>
        <name>Zn(2+)</name>
        <dbReference type="ChEBI" id="CHEBI:29105"/>
        <note>catalytic</note>
    </ligand>
</feature>
<feature type="binding site" evidence="1">
    <location>
        <position position="147"/>
    </location>
    <ligand>
        <name>Zn(2+)</name>
        <dbReference type="ChEBI" id="CHEBI:29105"/>
        <note>catalytic</note>
    </ligand>
</feature>
<feature type="binding site" evidence="1">
    <location>
        <position position="225"/>
    </location>
    <ligand>
        <name>Zn(2+)</name>
        <dbReference type="ChEBI" id="CHEBI:29105"/>
        <note>catalytic</note>
    </ligand>
</feature>
<organism>
    <name type="scientific">Aliivibrio fischeri (strain MJ11)</name>
    <name type="common">Vibrio fischeri</name>
    <dbReference type="NCBI Taxonomy" id="388396"/>
    <lineage>
        <taxon>Bacteria</taxon>
        <taxon>Pseudomonadati</taxon>
        <taxon>Pseudomonadota</taxon>
        <taxon>Gammaproteobacteria</taxon>
        <taxon>Vibrionales</taxon>
        <taxon>Vibrionaceae</taxon>
        <taxon>Aliivibrio</taxon>
    </lineage>
</organism>
<reference key="1">
    <citation type="submission" date="2008-08" db="EMBL/GenBank/DDBJ databases">
        <title>Complete sequence of Vibrio fischeri strain MJ11.</title>
        <authorList>
            <person name="Mandel M.J."/>
            <person name="Stabb E.V."/>
            <person name="Ruby E.G."/>
            <person name="Ferriera S."/>
            <person name="Johnson J."/>
            <person name="Kravitz S."/>
            <person name="Beeson K."/>
            <person name="Sutton G."/>
            <person name="Rogers Y.-H."/>
            <person name="Friedman R."/>
            <person name="Frazier M."/>
            <person name="Venter J.C."/>
        </authorList>
    </citation>
    <scope>NUCLEOTIDE SEQUENCE [LARGE SCALE GENOMIC DNA]</scope>
    <source>
        <strain>MJ11</strain>
    </source>
</reference>
<comment type="cofactor">
    <cofactor evidence="1">
        <name>Zn(2+)</name>
        <dbReference type="ChEBI" id="CHEBI:29105"/>
    </cofactor>
    <text evidence="1">Binds 1 zinc ion per subunit.</text>
</comment>
<comment type="subcellular location">
    <subcellularLocation>
        <location evidence="1">Cell inner membrane</location>
        <topology evidence="1">Multi-pass membrane protein</topology>
    </subcellularLocation>
</comment>
<comment type="similarity">
    <text evidence="1">Belongs to the peptidase M48B family.</text>
</comment>
<protein>
    <recommendedName>
        <fullName evidence="1">Protease HtpX</fullName>
        <ecNumber evidence="1">3.4.24.-</ecNumber>
    </recommendedName>
    <alternativeName>
        <fullName evidence="1">Heat shock protein HtpX</fullName>
    </alternativeName>
</protein>
<name>HTPX_ALIFM</name>
<accession>B5FDN8</accession>
<dbReference type="EC" id="3.4.24.-" evidence="1"/>
<dbReference type="EMBL" id="CP001139">
    <property type="protein sequence ID" value="ACH66465.1"/>
    <property type="molecule type" value="Genomic_DNA"/>
</dbReference>
<dbReference type="RefSeq" id="WP_012533747.1">
    <property type="nucleotide sequence ID" value="NC_011184.1"/>
</dbReference>
<dbReference type="SMR" id="B5FDN8"/>
<dbReference type="MEROPS" id="M48.002"/>
<dbReference type="KEGG" id="vfm:VFMJ11_1232"/>
<dbReference type="HOGENOM" id="CLU_042266_1_0_6"/>
<dbReference type="Proteomes" id="UP000001857">
    <property type="component" value="Chromosome I"/>
</dbReference>
<dbReference type="GO" id="GO:0005886">
    <property type="term" value="C:plasma membrane"/>
    <property type="evidence" value="ECO:0007669"/>
    <property type="project" value="UniProtKB-SubCell"/>
</dbReference>
<dbReference type="GO" id="GO:0004222">
    <property type="term" value="F:metalloendopeptidase activity"/>
    <property type="evidence" value="ECO:0007669"/>
    <property type="project" value="UniProtKB-UniRule"/>
</dbReference>
<dbReference type="GO" id="GO:0008270">
    <property type="term" value="F:zinc ion binding"/>
    <property type="evidence" value="ECO:0007669"/>
    <property type="project" value="UniProtKB-UniRule"/>
</dbReference>
<dbReference type="GO" id="GO:0006508">
    <property type="term" value="P:proteolysis"/>
    <property type="evidence" value="ECO:0007669"/>
    <property type="project" value="UniProtKB-KW"/>
</dbReference>
<dbReference type="CDD" id="cd07335">
    <property type="entry name" value="M48B_HtpX_like"/>
    <property type="match status" value="1"/>
</dbReference>
<dbReference type="FunFam" id="3.30.2010.10:FF:000001">
    <property type="entry name" value="Protease HtpX"/>
    <property type="match status" value="1"/>
</dbReference>
<dbReference type="Gene3D" id="3.30.2010.10">
    <property type="entry name" value="Metalloproteases ('zincins'), catalytic domain"/>
    <property type="match status" value="1"/>
</dbReference>
<dbReference type="HAMAP" id="MF_00188">
    <property type="entry name" value="Pept_M48_protease_HtpX"/>
    <property type="match status" value="1"/>
</dbReference>
<dbReference type="InterPro" id="IPR050083">
    <property type="entry name" value="HtpX_protease"/>
</dbReference>
<dbReference type="InterPro" id="IPR022919">
    <property type="entry name" value="Pept_M48_protease_HtpX"/>
</dbReference>
<dbReference type="InterPro" id="IPR001915">
    <property type="entry name" value="Peptidase_M48"/>
</dbReference>
<dbReference type="NCBIfam" id="NF003965">
    <property type="entry name" value="PRK05457.1"/>
    <property type="match status" value="1"/>
</dbReference>
<dbReference type="PANTHER" id="PTHR43221">
    <property type="entry name" value="PROTEASE HTPX"/>
    <property type="match status" value="1"/>
</dbReference>
<dbReference type="PANTHER" id="PTHR43221:SF1">
    <property type="entry name" value="PROTEASE HTPX"/>
    <property type="match status" value="1"/>
</dbReference>
<dbReference type="Pfam" id="PF01435">
    <property type="entry name" value="Peptidase_M48"/>
    <property type="match status" value="1"/>
</dbReference>
<keyword id="KW-0997">Cell inner membrane</keyword>
<keyword id="KW-1003">Cell membrane</keyword>
<keyword id="KW-0378">Hydrolase</keyword>
<keyword id="KW-0472">Membrane</keyword>
<keyword id="KW-0479">Metal-binding</keyword>
<keyword id="KW-0482">Metalloprotease</keyword>
<keyword id="KW-0645">Protease</keyword>
<keyword id="KW-0346">Stress response</keyword>
<keyword id="KW-0812">Transmembrane</keyword>
<keyword id="KW-1133">Transmembrane helix</keyword>
<keyword id="KW-0862">Zinc</keyword>
<evidence type="ECO:0000255" key="1">
    <source>
        <dbReference type="HAMAP-Rule" id="MF_00188"/>
    </source>
</evidence>
<gene>
    <name evidence="1" type="primary">htpX</name>
    <name type="ordered locus">VFMJ11_1232</name>
</gene>
<proteinExistence type="inferred from homology"/>